<gene>
    <name evidence="1" type="primary">prfA</name>
    <name type="ordered locus">CLB_0175</name>
</gene>
<accession>A7FQG2</accession>
<organism>
    <name type="scientific">Clostridium botulinum (strain ATCC 19397 / Type A)</name>
    <dbReference type="NCBI Taxonomy" id="441770"/>
    <lineage>
        <taxon>Bacteria</taxon>
        <taxon>Bacillati</taxon>
        <taxon>Bacillota</taxon>
        <taxon>Clostridia</taxon>
        <taxon>Eubacteriales</taxon>
        <taxon>Clostridiaceae</taxon>
        <taxon>Clostridium</taxon>
    </lineage>
</organism>
<keyword id="KW-0963">Cytoplasm</keyword>
<keyword id="KW-0488">Methylation</keyword>
<keyword id="KW-0648">Protein biosynthesis</keyword>
<dbReference type="EMBL" id="CP000726">
    <property type="protein sequence ID" value="ABS33772.1"/>
    <property type="molecule type" value="Genomic_DNA"/>
</dbReference>
<dbReference type="SMR" id="A7FQG2"/>
<dbReference type="KEGG" id="cba:CLB_0175"/>
<dbReference type="HOGENOM" id="CLU_036856_0_1_9"/>
<dbReference type="GO" id="GO:0005737">
    <property type="term" value="C:cytoplasm"/>
    <property type="evidence" value="ECO:0007669"/>
    <property type="project" value="UniProtKB-SubCell"/>
</dbReference>
<dbReference type="GO" id="GO:0016149">
    <property type="term" value="F:translation release factor activity, codon specific"/>
    <property type="evidence" value="ECO:0007669"/>
    <property type="project" value="UniProtKB-UniRule"/>
</dbReference>
<dbReference type="FunFam" id="3.30.160.20:FF:000004">
    <property type="entry name" value="Peptide chain release factor 1"/>
    <property type="match status" value="1"/>
</dbReference>
<dbReference type="FunFam" id="3.30.70.1660:FF:000002">
    <property type="entry name" value="Peptide chain release factor 1"/>
    <property type="match status" value="1"/>
</dbReference>
<dbReference type="FunFam" id="3.30.70.1660:FF:000004">
    <property type="entry name" value="Peptide chain release factor 1"/>
    <property type="match status" value="1"/>
</dbReference>
<dbReference type="Gene3D" id="3.30.160.20">
    <property type="match status" value="1"/>
</dbReference>
<dbReference type="Gene3D" id="3.30.70.1660">
    <property type="match status" value="1"/>
</dbReference>
<dbReference type="Gene3D" id="6.10.140.1950">
    <property type="match status" value="1"/>
</dbReference>
<dbReference type="HAMAP" id="MF_00093">
    <property type="entry name" value="Rel_fac_1"/>
    <property type="match status" value="1"/>
</dbReference>
<dbReference type="InterPro" id="IPR005139">
    <property type="entry name" value="PCRF"/>
</dbReference>
<dbReference type="InterPro" id="IPR000352">
    <property type="entry name" value="Pep_chain_release_fac_I"/>
</dbReference>
<dbReference type="InterPro" id="IPR045853">
    <property type="entry name" value="Pep_chain_release_fac_I_sf"/>
</dbReference>
<dbReference type="InterPro" id="IPR050057">
    <property type="entry name" value="Prokaryotic/Mito_RF"/>
</dbReference>
<dbReference type="InterPro" id="IPR004373">
    <property type="entry name" value="RF-1"/>
</dbReference>
<dbReference type="NCBIfam" id="TIGR00019">
    <property type="entry name" value="prfA"/>
    <property type="match status" value="1"/>
</dbReference>
<dbReference type="NCBIfam" id="NF001859">
    <property type="entry name" value="PRK00591.1"/>
    <property type="match status" value="1"/>
</dbReference>
<dbReference type="PANTHER" id="PTHR43804">
    <property type="entry name" value="LD18447P"/>
    <property type="match status" value="1"/>
</dbReference>
<dbReference type="PANTHER" id="PTHR43804:SF7">
    <property type="entry name" value="LD18447P"/>
    <property type="match status" value="1"/>
</dbReference>
<dbReference type="Pfam" id="PF03462">
    <property type="entry name" value="PCRF"/>
    <property type="match status" value="1"/>
</dbReference>
<dbReference type="Pfam" id="PF00472">
    <property type="entry name" value="RF-1"/>
    <property type="match status" value="1"/>
</dbReference>
<dbReference type="SMART" id="SM00937">
    <property type="entry name" value="PCRF"/>
    <property type="match status" value="1"/>
</dbReference>
<dbReference type="SUPFAM" id="SSF75620">
    <property type="entry name" value="Release factor"/>
    <property type="match status" value="1"/>
</dbReference>
<dbReference type="PROSITE" id="PS00745">
    <property type="entry name" value="RF_PROK_I"/>
    <property type="match status" value="1"/>
</dbReference>
<reference key="1">
    <citation type="journal article" date="2007" name="PLoS ONE">
        <title>Analysis of the neurotoxin complex genes in Clostridium botulinum A1-A4 and B1 strains: BoNT/A3, /Ba4 and /B1 clusters are located within plasmids.</title>
        <authorList>
            <person name="Smith T.J."/>
            <person name="Hill K.K."/>
            <person name="Foley B.T."/>
            <person name="Detter J.C."/>
            <person name="Munk A.C."/>
            <person name="Bruce D.C."/>
            <person name="Doggett N.A."/>
            <person name="Smith L.A."/>
            <person name="Marks J.D."/>
            <person name="Xie G."/>
            <person name="Brettin T.S."/>
        </authorList>
    </citation>
    <scope>NUCLEOTIDE SEQUENCE [LARGE SCALE GENOMIC DNA]</scope>
    <source>
        <strain>ATCC 19397 / Type A</strain>
    </source>
</reference>
<comment type="function">
    <text evidence="1">Peptide chain release factor 1 directs the termination of translation in response to the peptide chain termination codons UAG and UAA.</text>
</comment>
<comment type="subcellular location">
    <subcellularLocation>
        <location evidence="1">Cytoplasm</location>
    </subcellularLocation>
</comment>
<comment type="PTM">
    <text evidence="1">Methylated by PrmC. Methylation increases the termination efficiency of RF1.</text>
</comment>
<comment type="similarity">
    <text evidence="1">Belongs to the prokaryotic/mitochondrial release factor family.</text>
</comment>
<evidence type="ECO:0000255" key="1">
    <source>
        <dbReference type="HAMAP-Rule" id="MF_00093"/>
    </source>
</evidence>
<protein>
    <recommendedName>
        <fullName evidence="1">Peptide chain release factor 1</fullName>
        <shortName evidence="1">RF-1</shortName>
    </recommendedName>
</protein>
<feature type="chain" id="PRO_1000004880" description="Peptide chain release factor 1">
    <location>
        <begin position="1"/>
        <end position="358"/>
    </location>
</feature>
<feature type="modified residue" description="N5-methylglutamine" evidence="1">
    <location>
        <position position="233"/>
    </location>
</feature>
<sequence length="358" mass="40599">MLERLNFIENKYEELSNKISDPSVMANQKEWQKLCKEHADLEIIVNTYREYKKAQEDLESDKEMLKEESDKELREMAQEEIKELTLKLEDLERELTILLLPKDPNDDKDVFIEIRAGAGGEEAALFASNLLRMYTRYAERKNWKVETISLNATDIGGFKEVTVAVKGKGAYSRLKYESGVHRVQRVPDTESSGRIHTSTATVAVLPEVDDVDININANDLRIDVYRASGHGGQCVNTTDSAVRITHLPTGLVVTCQDEKSQLKNKEKAMKVLKARLFEAAEAERAASIAEDRKSQVGTGDRSERIRTYNYPQGRITDHRIGLTLYKLETFLDGDIDEAIEALVTEDQAEKMKDLGRVN</sequence>
<name>RF1_CLOB1</name>
<proteinExistence type="inferred from homology"/>